<reference key="1">
    <citation type="journal article" date="1998" name="J. Biol. Chem.">
        <title>Structure, synthesis, and molecular cloning of dermaseptins B, a family of skin peptide antibiotics.</title>
        <authorList>
            <person name="Charpentier S."/>
            <person name="Amiche M."/>
            <person name="Mester J."/>
            <person name="Vouille V."/>
            <person name="Le Caer J.-P."/>
            <person name="Nicolas P."/>
            <person name="Delfour A."/>
        </authorList>
    </citation>
    <scope>NUCLEOTIDE SEQUENCE [MRNA]</scope>
    <scope>PROTEIN SEQUENCE OF 46-73</scope>
    <scope>SUBCELLULAR LOCATION</scope>
    <scope>AMIDATION AT GLN-73</scope>
    <scope>MASS SPECTROMETRY</scope>
    <source>
        <tissue>Skin secretion</tissue>
    </source>
</reference>
<reference key="2">
    <citation type="journal article" date="2008" name="Peptides">
        <title>A consistent nomenclature of antimicrobial peptides isolated from frogs of the subfamily Phyllomedusinae.</title>
        <authorList>
            <person name="Amiche M."/>
            <person name="Ladram A."/>
            <person name="Nicolas P."/>
        </authorList>
    </citation>
    <scope>NOMENCLATURE</scope>
</reference>
<sequence>MAFLKKSLFLVLFLGLVSLSICEEEKRENKDEIEQEDDEQSEEKRALWKDILKNVGKAAGKAVLNTVTDMVNQGEQ</sequence>
<comment type="function">
    <text evidence="1 2 4">Potent antimicrobial peptide with potent activity against Gram-positive and Gram-negative bacteria (PubMed:9614066). Probably acts by disturbing membrane functions with its amphipathic structure (PubMed:9614066). Has an activity of stimulation of insulin release, which may protect the species from being eaten by predators by causing fatal hypoglycemia (By similarity). Has hemolytic activity (By similarity).</text>
</comment>
<comment type="subcellular location">
    <subcellularLocation>
        <location evidence="4">Secreted</location>
    </subcellularLocation>
</comment>
<comment type="tissue specificity">
    <text evidence="8">Expressed by the skin glands.</text>
</comment>
<comment type="mass spectrometry"/>
<comment type="miscellaneous">
    <text evidence="7">The primary structure of this peptide is identical to that of Insulin-releasing peptide from Phyllomedusa trinitatis (AC C0HLC4), and Dermaseptin-2 from P.tarsius (AC P84922).</text>
</comment>
<comment type="similarity">
    <text evidence="7">Belongs to the frog skin active peptide (FSAP) family. Dermaseptin subfamily.</text>
</comment>
<comment type="online information" name="The antimicrobial peptide database">
    <link uri="https://wangapd3.com/database/query_output.php?ID=0163"/>
</comment>
<organism>
    <name type="scientific">Phyllomedusa bicolor</name>
    <name type="common">Two-colored leaf frog</name>
    <name type="synonym">Rana bicolor</name>
    <dbReference type="NCBI Taxonomy" id="8393"/>
    <lineage>
        <taxon>Eukaryota</taxon>
        <taxon>Metazoa</taxon>
        <taxon>Chordata</taxon>
        <taxon>Craniata</taxon>
        <taxon>Vertebrata</taxon>
        <taxon>Euteleostomi</taxon>
        <taxon>Amphibia</taxon>
        <taxon>Batrachia</taxon>
        <taxon>Anura</taxon>
        <taxon>Neobatrachia</taxon>
        <taxon>Hyloidea</taxon>
        <taxon>Hylidae</taxon>
        <taxon>Phyllomedusinae</taxon>
        <taxon>Phyllomedusa</taxon>
    </lineage>
</organism>
<keyword id="KW-0027">Amidation</keyword>
<keyword id="KW-0878">Amphibian defense peptide</keyword>
<keyword id="KW-0044">Antibiotic</keyword>
<keyword id="KW-0929">Antimicrobial</keyword>
<keyword id="KW-0165">Cleavage on pair of basic residues</keyword>
<keyword id="KW-0903">Direct protein sequencing</keyword>
<keyword id="KW-0391">Immunity</keyword>
<keyword id="KW-0399">Innate immunity</keyword>
<keyword id="KW-0964">Secreted</keyword>
<keyword id="KW-0732">Signal</keyword>
<evidence type="ECO:0000250" key="1">
    <source>
        <dbReference type="UniProtKB" id="C0HLC4"/>
    </source>
</evidence>
<evidence type="ECO:0000250" key="2">
    <source>
        <dbReference type="UniProtKB" id="P84922"/>
    </source>
</evidence>
<evidence type="ECO:0000255" key="3"/>
<evidence type="ECO:0000269" key="4">
    <source>
    </source>
</evidence>
<evidence type="ECO:0000303" key="5">
    <source>
    </source>
</evidence>
<evidence type="ECO:0000303" key="6">
    <source>
    </source>
</evidence>
<evidence type="ECO:0000305" key="7"/>
<evidence type="ECO:0000305" key="8">
    <source>
    </source>
</evidence>
<dbReference type="EMBL" id="Y16565">
    <property type="protein sequence ID" value="CAA76289.1"/>
    <property type="molecule type" value="mRNA"/>
</dbReference>
<dbReference type="GO" id="GO:0005576">
    <property type="term" value="C:extracellular region"/>
    <property type="evidence" value="ECO:0007669"/>
    <property type="project" value="UniProtKB-SubCell"/>
</dbReference>
<dbReference type="GO" id="GO:0042742">
    <property type="term" value="P:defense response to bacterium"/>
    <property type="evidence" value="ECO:0007669"/>
    <property type="project" value="UniProtKB-KW"/>
</dbReference>
<dbReference type="GO" id="GO:0045087">
    <property type="term" value="P:innate immune response"/>
    <property type="evidence" value="ECO:0007669"/>
    <property type="project" value="UniProtKB-KW"/>
</dbReference>
<dbReference type="InterPro" id="IPR022731">
    <property type="entry name" value="Dermaseptin_dom"/>
</dbReference>
<dbReference type="InterPro" id="IPR004275">
    <property type="entry name" value="Frog_antimicrobial_propeptide"/>
</dbReference>
<dbReference type="InterPro" id="IPR016322">
    <property type="entry name" value="FSAP"/>
</dbReference>
<dbReference type="Pfam" id="PF12121">
    <property type="entry name" value="DD_K"/>
    <property type="match status" value="1"/>
</dbReference>
<dbReference type="Pfam" id="PF03032">
    <property type="entry name" value="FSAP_sig_propep"/>
    <property type="match status" value="1"/>
</dbReference>
<dbReference type="PIRSF" id="PIRSF001822">
    <property type="entry name" value="Dermaseptin_precursor"/>
    <property type="match status" value="1"/>
</dbReference>
<proteinExistence type="evidence at protein level"/>
<accession>P81486</accession>
<feature type="signal peptide" evidence="3">
    <location>
        <begin position="1"/>
        <end position="22"/>
    </location>
</feature>
<feature type="propeptide" id="PRO_0000007097" evidence="8">
    <location>
        <begin position="23"/>
        <end position="43"/>
    </location>
</feature>
<feature type="peptide" id="PRO_0000007098" description="Dermaseptin-B4" evidence="4">
    <location>
        <begin position="46"/>
        <end position="73"/>
    </location>
</feature>
<feature type="propeptide" id="PRO_0000007099" evidence="8">
    <location>
        <begin position="75"/>
        <end position="76"/>
    </location>
</feature>
<feature type="modified residue" description="Glutamine amide" evidence="4">
    <location>
        <position position="73"/>
    </location>
</feature>
<protein>
    <recommendedName>
        <fullName evidence="5 6">Dermaseptin-B4</fullName>
        <shortName evidence="5">DRS-B4</shortName>
    </recommendedName>
    <alternativeName>
        <fullName>Dermaseptin BIV</fullName>
    </alternativeName>
</protein>
<name>DRS4_PHYBI</name>